<organism>
    <name type="scientific">Streptococcus pyogenes serotype M12 (strain MGAS2096)</name>
    <dbReference type="NCBI Taxonomy" id="370553"/>
    <lineage>
        <taxon>Bacteria</taxon>
        <taxon>Bacillati</taxon>
        <taxon>Bacillota</taxon>
        <taxon>Bacilli</taxon>
        <taxon>Lactobacillales</taxon>
        <taxon>Streptococcaceae</taxon>
        <taxon>Streptococcus</taxon>
    </lineage>
</organism>
<sequence length="1207" mass="134726">MVDVNRFKSMQITLASPSKVRSWSYGEVKKPETINYRTLKPEREGLFDEVIFGPTKDWECACGKYKRIRYKGIVCDRCGVEVTRAKVRRERMGHIELKAPVSHIWYFKGIPSRMGLTLDMSPRALEEVIYFAAYVVIDPKDTPLEPKSLLTEREYREKLQEYGHGSFVAKMGAEAIQDLLKRVDLAAEIAELKEELKSASGQKRIKAVRRLDVLDAFNKSGNKPEWMVLNILPVIPPDLRPMVQLDGGRFAASDLNDLYRRVINRNNRLARLLELNAPGIIVQNEKRMLQEAVDALIDNGRRGRPITGPGSRPLKSLSHMLKGKQGRFRQNLLGKRVDFSGRSVIAVGPTLKMYQCGVPREMAIELFKPFVMREIVAKEYAGNVKAAKRMVERGDERIWDILEEVIKEHPVLLNRAPTLHRLGIQAFEPVLIDGKALRLHPLVCEAYNADFDGDQMAIHVPLSEEAQAEARLLMLAAEHILNPKDGKPVVTPSQDMVLGNYYLTMEDAGREGEGMIFKDKDEAVMAYRNGYAHLHSRVGIAVDSMPNKPWKDSQRHKIMVTTVGKILFNDIMPEDLPYLQEPNNANLTEGTPDKYFLEPGQDIQEVIDGLDINVPFKKKNLGNIIAETFKRFRTTETSAFLDRLKDLGYYHSTLAGLTVGIADIPVIDNKAEIIDAAHHRVEEINKAFRRGLMTDDDRYVAVTTTWREAKEALEKRLIETQDPKNPIVMMMDSGARGNISNFSQLAGMRGLMAAPNGRIMELPILSNFREGLSVLEMFFSTHGARKGMTDTALKTADSGYLTRRLVDVAQDVIIREDDCGTDRGLLIRAITDGKEVTETLEERLQGRYTRKSVKHPETGEVLIGADQLITEDMARKIVDAGVEEVTIRSVFTCATRHGVCRHCYGINLATGDAVEVGEAVGTIAAQSIGEPGTQLTMRTFHTGGVASNTDITQGLPRIQEIFEARNPKGEAVITEVKGNVVEIEEDASTRTKKVYVQGKTGMGEYVVPFTARMKVEVGDEVNRGAALTEGSIQPKRLLEVRDTLSVETYLLAEVQKVYRSQGVEIGDKHVEVMVRQMLRKVRVMDPGDTDLLPGTLMDISDFTDANKDIVISGGIPATSRPVLMGITKASLETNSFLSAASFQETTRVLTDAAIRGKKDHLLGLKENVIIGKIIPAGTGMARYRNIEPQAMNEIEVIDHTEVSAEAE</sequence>
<reference key="1">
    <citation type="journal article" date="2006" name="Proc. Natl. Acad. Sci. U.S.A.">
        <title>Molecular genetic anatomy of inter- and intraserotype variation in the human bacterial pathogen group A Streptococcus.</title>
        <authorList>
            <person name="Beres S.B."/>
            <person name="Richter E.W."/>
            <person name="Nagiec M.J."/>
            <person name="Sumby P."/>
            <person name="Porcella S.F."/>
            <person name="DeLeo F.R."/>
            <person name="Musser J.M."/>
        </authorList>
    </citation>
    <scope>NUCLEOTIDE SEQUENCE [LARGE SCALE GENOMIC DNA]</scope>
    <source>
        <strain>MGAS2096</strain>
    </source>
</reference>
<evidence type="ECO:0000255" key="1">
    <source>
        <dbReference type="HAMAP-Rule" id="MF_01322"/>
    </source>
</evidence>
<protein>
    <recommendedName>
        <fullName evidence="1">DNA-directed RNA polymerase subunit beta'</fullName>
        <shortName evidence="1">RNAP subunit beta'</shortName>
        <ecNumber evidence="1">2.7.7.6</ecNumber>
    </recommendedName>
    <alternativeName>
        <fullName evidence="1">RNA polymerase subunit beta'</fullName>
    </alternativeName>
    <alternativeName>
        <fullName evidence="1">Transcriptase subunit beta'</fullName>
    </alternativeName>
</protein>
<name>RPOC_STRPB</name>
<keyword id="KW-0240">DNA-directed RNA polymerase</keyword>
<keyword id="KW-0460">Magnesium</keyword>
<keyword id="KW-0479">Metal-binding</keyword>
<keyword id="KW-0548">Nucleotidyltransferase</keyword>
<keyword id="KW-0804">Transcription</keyword>
<keyword id="KW-0808">Transferase</keyword>
<keyword id="KW-0862">Zinc</keyword>
<gene>
    <name evidence="1" type="primary">rpoC</name>
    <name type="ordered locus">MGAS2096_Spy0087</name>
</gene>
<dbReference type="EC" id="2.7.7.6" evidence="1"/>
<dbReference type="EMBL" id="CP000261">
    <property type="protein sequence ID" value="ABF35139.1"/>
    <property type="molecule type" value="Genomic_DNA"/>
</dbReference>
<dbReference type="SMR" id="Q1JE19"/>
<dbReference type="KEGG" id="spj:MGAS2096_Spy0087"/>
<dbReference type="HOGENOM" id="CLU_000524_3_1_9"/>
<dbReference type="GO" id="GO:0000428">
    <property type="term" value="C:DNA-directed RNA polymerase complex"/>
    <property type="evidence" value="ECO:0007669"/>
    <property type="project" value="UniProtKB-KW"/>
</dbReference>
<dbReference type="GO" id="GO:0003677">
    <property type="term" value="F:DNA binding"/>
    <property type="evidence" value="ECO:0007669"/>
    <property type="project" value="UniProtKB-UniRule"/>
</dbReference>
<dbReference type="GO" id="GO:0003899">
    <property type="term" value="F:DNA-directed RNA polymerase activity"/>
    <property type="evidence" value="ECO:0007669"/>
    <property type="project" value="UniProtKB-UniRule"/>
</dbReference>
<dbReference type="GO" id="GO:0000287">
    <property type="term" value="F:magnesium ion binding"/>
    <property type="evidence" value="ECO:0007669"/>
    <property type="project" value="UniProtKB-UniRule"/>
</dbReference>
<dbReference type="GO" id="GO:0008270">
    <property type="term" value="F:zinc ion binding"/>
    <property type="evidence" value="ECO:0007669"/>
    <property type="project" value="UniProtKB-UniRule"/>
</dbReference>
<dbReference type="GO" id="GO:0006351">
    <property type="term" value="P:DNA-templated transcription"/>
    <property type="evidence" value="ECO:0007669"/>
    <property type="project" value="UniProtKB-UniRule"/>
</dbReference>
<dbReference type="CDD" id="cd02655">
    <property type="entry name" value="RNAP_beta'_C"/>
    <property type="match status" value="1"/>
</dbReference>
<dbReference type="CDD" id="cd01609">
    <property type="entry name" value="RNAP_beta'_N"/>
    <property type="match status" value="1"/>
</dbReference>
<dbReference type="FunFam" id="1.10.150.390:FF:000002">
    <property type="entry name" value="DNA-directed RNA polymerase subunit beta"/>
    <property type="match status" value="1"/>
</dbReference>
<dbReference type="FunFam" id="4.10.860.120:FF:000001">
    <property type="entry name" value="DNA-directed RNA polymerase subunit beta"/>
    <property type="match status" value="1"/>
</dbReference>
<dbReference type="Gene3D" id="1.10.132.30">
    <property type="match status" value="1"/>
</dbReference>
<dbReference type="Gene3D" id="1.10.150.390">
    <property type="match status" value="1"/>
</dbReference>
<dbReference type="Gene3D" id="1.10.1790.20">
    <property type="match status" value="1"/>
</dbReference>
<dbReference type="Gene3D" id="1.10.40.90">
    <property type="match status" value="1"/>
</dbReference>
<dbReference type="Gene3D" id="2.40.40.20">
    <property type="match status" value="1"/>
</dbReference>
<dbReference type="Gene3D" id="2.40.50.100">
    <property type="match status" value="1"/>
</dbReference>
<dbReference type="Gene3D" id="4.10.860.120">
    <property type="entry name" value="RNA polymerase II, clamp domain"/>
    <property type="match status" value="1"/>
</dbReference>
<dbReference type="Gene3D" id="1.10.274.100">
    <property type="entry name" value="RNA polymerase Rpb1, domain 3"/>
    <property type="match status" value="2"/>
</dbReference>
<dbReference type="HAMAP" id="MF_01322">
    <property type="entry name" value="RNApol_bact_RpoC"/>
    <property type="match status" value="1"/>
</dbReference>
<dbReference type="InterPro" id="IPR045867">
    <property type="entry name" value="DNA-dir_RpoC_beta_prime"/>
</dbReference>
<dbReference type="InterPro" id="IPR012754">
    <property type="entry name" value="DNA-dir_RpoC_beta_prime_bact"/>
</dbReference>
<dbReference type="InterPro" id="IPR000722">
    <property type="entry name" value="RNA_pol_asu"/>
</dbReference>
<dbReference type="InterPro" id="IPR006592">
    <property type="entry name" value="RNA_pol_N"/>
</dbReference>
<dbReference type="InterPro" id="IPR007080">
    <property type="entry name" value="RNA_pol_Rpb1_1"/>
</dbReference>
<dbReference type="InterPro" id="IPR007066">
    <property type="entry name" value="RNA_pol_Rpb1_3"/>
</dbReference>
<dbReference type="InterPro" id="IPR042102">
    <property type="entry name" value="RNA_pol_Rpb1_3_sf"/>
</dbReference>
<dbReference type="InterPro" id="IPR007083">
    <property type="entry name" value="RNA_pol_Rpb1_4"/>
</dbReference>
<dbReference type="InterPro" id="IPR007081">
    <property type="entry name" value="RNA_pol_Rpb1_5"/>
</dbReference>
<dbReference type="InterPro" id="IPR044893">
    <property type="entry name" value="RNA_pol_Rpb1_clamp_domain"/>
</dbReference>
<dbReference type="InterPro" id="IPR038120">
    <property type="entry name" value="Rpb1_funnel_sf"/>
</dbReference>
<dbReference type="NCBIfam" id="TIGR02386">
    <property type="entry name" value="rpoC_TIGR"/>
    <property type="match status" value="1"/>
</dbReference>
<dbReference type="PANTHER" id="PTHR19376">
    <property type="entry name" value="DNA-DIRECTED RNA POLYMERASE"/>
    <property type="match status" value="1"/>
</dbReference>
<dbReference type="PANTHER" id="PTHR19376:SF54">
    <property type="entry name" value="DNA-DIRECTED RNA POLYMERASE SUBUNIT BETA"/>
    <property type="match status" value="1"/>
</dbReference>
<dbReference type="Pfam" id="PF04997">
    <property type="entry name" value="RNA_pol_Rpb1_1"/>
    <property type="match status" value="1"/>
</dbReference>
<dbReference type="Pfam" id="PF00623">
    <property type="entry name" value="RNA_pol_Rpb1_2"/>
    <property type="match status" value="2"/>
</dbReference>
<dbReference type="Pfam" id="PF04983">
    <property type="entry name" value="RNA_pol_Rpb1_3"/>
    <property type="match status" value="1"/>
</dbReference>
<dbReference type="Pfam" id="PF05000">
    <property type="entry name" value="RNA_pol_Rpb1_4"/>
    <property type="match status" value="1"/>
</dbReference>
<dbReference type="Pfam" id="PF04998">
    <property type="entry name" value="RNA_pol_Rpb1_5"/>
    <property type="match status" value="1"/>
</dbReference>
<dbReference type="SMART" id="SM00663">
    <property type="entry name" value="RPOLA_N"/>
    <property type="match status" value="1"/>
</dbReference>
<dbReference type="SUPFAM" id="SSF64484">
    <property type="entry name" value="beta and beta-prime subunits of DNA dependent RNA-polymerase"/>
    <property type="match status" value="1"/>
</dbReference>
<proteinExistence type="inferred from homology"/>
<comment type="function">
    <text evidence="1">DNA-dependent RNA polymerase catalyzes the transcription of DNA into RNA using the four ribonucleoside triphosphates as substrates.</text>
</comment>
<comment type="catalytic activity">
    <reaction evidence="1">
        <text>RNA(n) + a ribonucleoside 5'-triphosphate = RNA(n+1) + diphosphate</text>
        <dbReference type="Rhea" id="RHEA:21248"/>
        <dbReference type="Rhea" id="RHEA-COMP:14527"/>
        <dbReference type="Rhea" id="RHEA-COMP:17342"/>
        <dbReference type="ChEBI" id="CHEBI:33019"/>
        <dbReference type="ChEBI" id="CHEBI:61557"/>
        <dbReference type="ChEBI" id="CHEBI:140395"/>
        <dbReference type="EC" id="2.7.7.6"/>
    </reaction>
</comment>
<comment type="cofactor">
    <cofactor evidence="1">
        <name>Mg(2+)</name>
        <dbReference type="ChEBI" id="CHEBI:18420"/>
    </cofactor>
    <text evidence="1">Binds 1 Mg(2+) ion per subunit.</text>
</comment>
<comment type="cofactor">
    <cofactor evidence="1">
        <name>Zn(2+)</name>
        <dbReference type="ChEBI" id="CHEBI:29105"/>
    </cofactor>
    <text evidence="1">Binds 2 Zn(2+) ions per subunit.</text>
</comment>
<comment type="subunit">
    <text evidence="1">The RNAP catalytic core consists of 2 alpha, 1 beta, 1 beta' and 1 omega subunit. When a sigma factor is associated with the core the holoenzyme is formed, which can initiate transcription.</text>
</comment>
<comment type="similarity">
    <text evidence="1">Belongs to the RNA polymerase beta' chain family.</text>
</comment>
<feature type="chain" id="PRO_0000308884" description="DNA-directed RNA polymerase subunit beta'">
    <location>
        <begin position="1"/>
        <end position="1207"/>
    </location>
</feature>
<feature type="binding site" evidence="1">
    <location>
        <position position="60"/>
    </location>
    <ligand>
        <name>Zn(2+)</name>
        <dbReference type="ChEBI" id="CHEBI:29105"/>
        <label>1</label>
    </ligand>
</feature>
<feature type="binding site" evidence="1">
    <location>
        <position position="62"/>
    </location>
    <ligand>
        <name>Zn(2+)</name>
        <dbReference type="ChEBI" id="CHEBI:29105"/>
        <label>1</label>
    </ligand>
</feature>
<feature type="binding site" evidence="1">
    <location>
        <position position="75"/>
    </location>
    <ligand>
        <name>Zn(2+)</name>
        <dbReference type="ChEBI" id="CHEBI:29105"/>
        <label>1</label>
    </ligand>
</feature>
<feature type="binding site" evidence="1">
    <location>
        <position position="78"/>
    </location>
    <ligand>
        <name>Zn(2+)</name>
        <dbReference type="ChEBI" id="CHEBI:29105"/>
        <label>1</label>
    </ligand>
</feature>
<feature type="binding site" evidence="1">
    <location>
        <position position="450"/>
    </location>
    <ligand>
        <name>Mg(2+)</name>
        <dbReference type="ChEBI" id="CHEBI:18420"/>
    </ligand>
</feature>
<feature type="binding site" evidence="1">
    <location>
        <position position="452"/>
    </location>
    <ligand>
        <name>Mg(2+)</name>
        <dbReference type="ChEBI" id="CHEBI:18420"/>
    </ligand>
</feature>
<feature type="binding site" evidence="1">
    <location>
        <position position="454"/>
    </location>
    <ligand>
        <name>Mg(2+)</name>
        <dbReference type="ChEBI" id="CHEBI:18420"/>
    </ligand>
</feature>
<feature type="binding site" evidence="1">
    <location>
        <position position="819"/>
    </location>
    <ligand>
        <name>Zn(2+)</name>
        <dbReference type="ChEBI" id="CHEBI:29105"/>
        <label>2</label>
    </ligand>
</feature>
<feature type="binding site" evidence="1">
    <location>
        <position position="893"/>
    </location>
    <ligand>
        <name>Zn(2+)</name>
        <dbReference type="ChEBI" id="CHEBI:29105"/>
        <label>2</label>
    </ligand>
</feature>
<feature type="binding site" evidence="1">
    <location>
        <position position="900"/>
    </location>
    <ligand>
        <name>Zn(2+)</name>
        <dbReference type="ChEBI" id="CHEBI:29105"/>
        <label>2</label>
    </ligand>
</feature>
<feature type="binding site" evidence="1">
    <location>
        <position position="903"/>
    </location>
    <ligand>
        <name>Zn(2+)</name>
        <dbReference type="ChEBI" id="CHEBI:29105"/>
        <label>2</label>
    </ligand>
</feature>
<accession>Q1JE19</accession>